<sequence>MFEVNPVLNKLKELSERTELLRGYFDYDAKKERLEEVNAELEQPDVWNEPERAQALGKERVSLENVVGTIDVLTQGAEDVEMLVSLAVEGEDEDTFNEAVAEADVLETKLVDLEFRRMFSGQHDGSDCYIDIQSGSGGTEAQDWANMVLRMYLRWGDAHGYKPELIELSDGDVAGIKSATVKFTGEYAFGWLRTETGVHRLVRKSPFDSGGRRHTSFCSVFVYPEIDDDIDIEINPADLRIDVYRASGAGGQHVNRTESAVRITHIPTGVVVQCQNDRSQHKNKDQCMKQLKAKLYELEIQKQNAEKQALEETKSDIGWGSQIRSYVLDDARIKDLRTGVETRNTQAVLDGDLDKFIEASLKSGL</sequence>
<keyword id="KW-0963">Cytoplasm</keyword>
<keyword id="KW-0488">Methylation</keyword>
<keyword id="KW-0648">Protein biosynthesis</keyword>
<reference key="1">
    <citation type="journal article" date="2008" name="BMC Genomics">
        <title>The genome of Aeromonas salmonicida subsp. salmonicida A449: insights into the evolution of a fish pathogen.</title>
        <authorList>
            <person name="Reith M.E."/>
            <person name="Singh R.K."/>
            <person name="Curtis B."/>
            <person name="Boyd J.M."/>
            <person name="Bouevitch A."/>
            <person name="Kimball J."/>
            <person name="Munholland J."/>
            <person name="Murphy C."/>
            <person name="Sarty D."/>
            <person name="Williams J."/>
            <person name="Nash J.H."/>
            <person name="Johnson S.C."/>
            <person name="Brown L.L."/>
        </authorList>
    </citation>
    <scope>NUCLEOTIDE SEQUENCE [LARGE SCALE GENOMIC DNA]</scope>
    <source>
        <strain>A449</strain>
    </source>
</reference>
<feature type="chain" id="PRO_1000004971" description="Peptide chain release factor 2">
    <location>
        <begin position="1"/>
        <end position="365"/>
    </location>
</feature>
<feature type="modified residue" description="N5-methylglutamine" evidence="1">
    <location>
        <position position="252"/>
    </location>
</feature>
<name>RF2_AERS4</name>
<protein>
    <recommendedName>
        <fullName evidence="1">Peptide chain release factor 2</fullName>
        <shortName evidence="1">RF-2</shortName>
    </recommendedName>
</protein>
<dbReference type="EMBL" id="CP000644">
    <property type="protein sequence ID" value="ABO89073.1"/>
    <property type="molecule type" value="Genomic_DNA"/>
</dbReference>
<dbReference type="SMR" id="A4SJK1"/>
<dbReference type="STRING" id="29491.GCA_000820065_02419"/>
<dbReference type="KEGG" id="asa:ASA_0941"/>
<dbReference type="eggNOG" id="COG1186">
    <property type="taxonomic scope" value="Bacteria"/>
</dbReference>
<dbReference type="HOGENOM" id="CLU_220733_2_1_6"/>
<dbReference type="Proteomes" id="UP000000225">
    <property type="component" value="Chromosome"/>
</dbReference>
<dbReference type="GO" id="GO:0005737">
    <property type="term" value="C:cytoplasm"/>
    <property type="evidence" value="ECO:0007669"/>
    <property type="project" value="UniProtKB-SubCell"/>
</dbReference>
<dbReference type="GO" id="GO:0016149">
    <property type="term" value="F:translation release factor activity, codon specific"/>
    <property type="evidence" value="ECO:0007669"/>
    <property type="project" value="UniProtKB-UniRule"/>
</dbReference>
<dbReference type="FunFam" id="3.30.160.20:FF:000010">
    <property type="entry name" value="Peptide chain release factor 2"/>
    <property type="match status" value="1"/>
</dbReference>
<dbReference type="Gene3D" id="3.30.160.20">
    <property type="match status" value="1"/>
</dbReference>
<dbReference type="Gene3D" id="3.30.70.1660">
    <property type="match status" value="1"/>
</dbReference>
<dbReference type="Gene3D" id="1.20.58.410">
    <property type="entry name" value="Release factor"/>
    <property type="match status" value="1"/>
</dbReference>
<dbReference type="HAMAP" id="MF_00094">
    <property type="entry name" value="Rel_fac_2"/>
    <property type="match status" value="1"/>
</dbReference>
<dbReference type="InterPro" id="IPR005139">
    <property type="entry name" value="PCRF"/>
</dbReference>
<dbReference type="InterPro" id="IPR000352">
    <property type="entry name" value="Pep_chain_release_fac_I"/>
</dbReference>
<dbReference type="InterPro" id="IPR045853">
    <property type="entry name" value="Pep_chain_release_fac_I_sf"/>
</dbReference>
<dbReference type="InterPro" id="IPR004374">
    <property type="entry name" value="PrfB"/>
</dbReference>
<dbReference type="NCBIfam" id="TIGR00020">
    <property type="entry name" value="prfB"/>
    <property type="match status" value="1"/>
</dbReference>
<dbReference type="PANTHER" id="PTHR43116:SF3">
    <property type="entry name" value="CLASS I PEPTIDE CHAIN RELEASE FACTOR"/>
    <property type="match status" value="1"/>
</dbReference>
<dbReference type="PANTHER" id="PTHR43116">
    <property type="entry name" value="PEPTIDE CHAIN RELEASE FACTOR 2"/>
    <property type="match status" value="1"/>
</dbReference>
<dbReference type="Pfam" id="PF03462">
    <property type="entry name" value="PCRF"/>
    <property type="match status" value="1"/>
</dbReference>
<dbReference type="Pfam" id="PF00472">
    <property type="entry name" value="RF-1"/>
    <property type="match status" value="1"/>
</dbReference>
<dbReference type="SMART" id="SM00937">
    <property type="entry name" value="PCRF"/>
    <property type="match status" value="1"/>
</dbReference>
<dbReference type="SUPFAM" id="SSF75620">
    <property type="entry name" value="Release factor"/>
    <property type="match status" value="1"/>
</dbReference>
<dbReference type="PROSITE" id="PS00745">
    <property type="entry name" value="RF_PROK_I"/>
    <property type="match status" value="1"/>
</dbReference>
<comment type="function">
    <text evidence="1">Peptide chain release factor 2 directs the termination of translation in response to the peptide chain termination codons UGA and UAA.</text>
</comment>
<comment type="subcellular location">
    <subcellularLocation>
        <location evidence="1">Cytoplasm</location>
    </subcellularLocation>
</comment>
<comment type="PTM">
    <text evidence="1">Methylated by PrmC. Methylation increases the termination efficiency of RF2.</text>
</comment>
<comment type="similarity">
    <text evidence="1">Belongs to the prokaryotic/mitochondrial release factor family.</text>
</comment>
<evidence type="ECO:0000255" key="1">
    <source>
        <dbReference type="HAMAP-Rule" id="MF_00094"/>
    </source>
</evidence>
<proteinExistence type="inferred from homology"/>
<gene>
    <name evidence="1" type="primary">prfB</name>
    <name type="ordered locus">ASA_0941</name>
</gene>
<accession>A4SJK1</accession>
<organism>
    <name type="scientific">Aeromonas salmonicida (strain A449)</name>
    <dbReference type="NCBI Taxonomy" id="382245"/>
    <lineage>
        <taxon>Bacteria</taxon>
        <taxon>Pseudomonadati</taxon>
        <taxon>Pseudomonadota</taxon>
        <taxon>Gammaproteobacteria</taxon>
        <taxon>Aeromonadales</taxon>
        <taxon>Aeromonadaceae</taxon>
        <taxon>Aeromonas</taxon>
    </lineage>
</organism>